<name>VM2_CERSA</name>
<comment type="function">
    <text evidence="4">Inhibits ADP- (IC(50)=66 nM) and collagen-induced (IC(50)=100 nM) aggregation of human platelets. In vitro, inhibits adhesion of endothelial cells to vitronectin, type-I collagen and, to a lower degree, fibronectin and laminin.</text>
</comment>
<comment type="subunit">
    <text evidence="1">Monomer.</text>
</comment>
<comment type="subcellular location">
    <subcellularLocation>
        <location evidence="4">Secreted</location>
    </subcellularLocation>
</comment>
<comment type="tissue specificity">
    <text evidence="7">Expressed by the venom gland.</text>
</comment>
<comment type="mass spectrometry"/>
<comment type="miscellaneous">
    <text evidence="7">The disintegrin belongs to the medium disintegrin subfamily.</text>
</comment>
<comment type="similarity">
    <text evidence="6">Belongs to the venom metalloproteinase (M12B) family. P-II subfamily. P-IIa sub-subfamily.</text>
</comment>
<sequence>EAGEECDCGAPANPCCDAATCKLRPGAQCAEGLCCDQCRFMKEGTVCHRARGDDVDDYCNGISAGCPRNPFH</sequence>
<feature type="chain" id="PRO_0000440581" description="Disintegrin sasaimin" evidence="4">
    <location>
        <begin position="1"/>
        <end position="72"/>
    </location>
</feature>
<feature type="domain" description="Disintegrin" evidence="3">
    <location>
        <begin position="1"/>
        <end position="72"/>
    </location>
</feature>
<feature type="short sequence motif" description="Cell attachment site" evidence="3">
    <location>
        <begin position="51"/>
        <end position="53"/>
    </location>
</feature>
<feature type="disulfide bond" evidence="2">
    <location>
        <begin position="6"/>
        <end position="21"/>
    </location>
</feature>
<feature type="disulfide bond" evidence="2">
    <location>
        <begin position="8"/>
        <end position="16"/>
    </location>
</feature>
<feature type="disulfide bond" evidence="2">
    <location>
        <begin position="15"/>
        <end position="38"/>
    </location>
</feature>
<feature type="disulfide bond" evidence="2">
    <location>
        <begin position="29"/>
        <end position="35"/>
    </location>
</feature>
<feature type="disulfide bond" evidence="2">
    <location>
        <begin position="34"/>
        <end position="59"/>
    </location>
</feature>
<feature type="disulfide bond" evidence="2 3">
    <location>
        <begin position="47"/>
        <end position="66"/>
    </location>
</feature>
<proteinExistence type="evidence at protein level"/>
<accession>C0HJM5</accession>
<keyword id="KW-1217">Cell adhesion impairing toxin</keyword>
<keyword id="KW-0903">Direct protein sequencing</keyword>
<keyword id="KW-1015">Disulfide bond</keyword>
<keyword id="KW-1199">Hemostasis impairing toxin</keyword>
<keyword id="KW-1201">Platelet aggregation inhibiting toxin</keyword>
<keyword id="KW-0964">Secreted</keyword>
<keyword id="KW-0800">Toxin</keyword>
<evidence type="ECO:0000250" key="1">
    <source>
        <dbReference type="UniProtKB" id="P17497"/>
    </source>
</evidence>
<evidence type="ECO:0000250" key="2">
    <source>
        <dbReference type="UniProtKB" id="P21859"/>
    </source>
</evidence>
<evidence type="ECO:0000255" key="3">
    <source>
        <dbReference type="PROSITE-ProRule" id="PRU00068"/>
    </source>
</evidence>
<evidence type="ECO:0000269" key="4">
    <source>
    </source>
</evidence>
<evidence type="ECO:0000303" key="5">
    <source>
    </source>
</evidence>
<evidence type="ECO:0000305" key="6"/>
<evidence type="ECO:0000305" key="7">
    <source>
    </source>
</evidence>
<reference evidence="6" key="1">
    <citation type="journal article" date="2014" name="Biochimie">
        <title>Isolation and characterization of four medium-size disintegrins from the venoms of Central American viperid snakes of the genera Atropoides, Bothrops, Cerrophidion and Crotalus.</title>
        <authorList>
            <person name="Angulo Y."/>
            <person name="Castro A."/>
            <person name="Lomonte B."/>
            <person name="Rucavado A."/>
            <person name="Fernandez J."/>
            <person name="Calvete J.J."/>
            <person name="Gutierrez J.M."/>
        </authorList>
    </citation>
    <scope>PROTEIN SEQUENCE</scope>
    <scope>FUNCTION</scope>
    <scope>SUBCELLULAR LOCATION</scope>
    <scope>MASS SPECTROMETRY</scope>
    <scope>IDENTIFICATION BY MASS SPECTROMETRY</scope>
    <source>
        <tissue evidence="5">Venom</tissue>
    </source>
</reference>
<protein>
    <recommendedName>
        <fullName evidence="5">Disintegrin sasaimin</fullName>
    </recommendedName>
</protein>
<dbReference type="SMR" id="C0HJM5"/>
<dbReference type="GO" id="GO:0005576">
    <property type="term" value="C:extracellular region"/>
    <property type="evidence" value="ECO:0000314"/>
    <property type="project" value="UniProtKB"/>
</dbReference>
<dbReference type="GO" id="GO:0090729">
    <property type="term" value="F:toxin activity"/>
    <property type="evidence" value="ECO:0007669"/>
    <property type="project" value="UniProtKB-KW"/>
</dbReference>
<dbReference type="GO" id="GO:0044477">
    <property type="term" value="P:venom-mediated suppression of platelet aggregation"/>
    <property type="evidence" value="ECO:0000314"/>
    <property type="project" value="UniProtKB"/>
</dbReference>
<dbReference type="FunFam" id="4.10.70.10:FF:000005">
    <property type="entry name" value="Zinc metalloproteinase/disintegrin"/>
    <property type="match status" value="1"/>
</dbReference>
<dbReference type="Gene3D" id="4.10.70.10">
    <property type="entry name" value="Disintegrin domain"/>
    <property type="match status" value="1"/>
</dbReference>
<dbReference type="InterPro" id="IPR001762">
    <property type="entry name" value="Disintegrin_dom"/>
</dbReference>
<dbReference type="InterPro" id="IPR036436">
    <property type="entry name" value="Disintegrin_dom_sf"/>
</dbReference>
<dbReference type="PANTHER" id="PTHR11905">
    <property type="entry name" value="ADAM A DISINTEGRIN AND METALLOPROTEASE DOMAIN"/>
    <property type="match status" value="1"/>
</dbReference>
<dbReference type="PANTHER" id="PTHR11905:SF159">
    <property type="entry name" value="ADAM METALLOPROTEASE"/>
    <property type="match status" value="1"/>
</dbReference>
<dbReference type="Pfam" id="PF00200">
    <property type="entry name" value="Disintegrin"/>
    <property type="match status" value="1"/>
</dbReference>
<dbReference type="PRINTS" id="PR00289">
    <property type="entry name" value="DISINTEGRIN"/>
</dbReference>
<dbReference type="SMART" id="SM00050">
    <property type="entry name" value="DISIN"/>
    <property type="match status" value="1"/>
</dbReference>
<dbReference type="SUPFAM" id="SSF57552">
    <property type="entry name" value="Blood coagulation inhibitor (disintegrin)"/>
    <property type="match status" value="1"/>
</dbReference>
<dbReference type="PROSITE" id="PS50214">
    <property type="entry name" value="DISINTEGRIN_2"/>
    <property type="match status" value="1"/>
</dbReference>
<organism evidence="5">
    <name type="scientific">Cerrophidion sasai</name>
    <name type="common">Costa Rica montane pitviper</name>
    <dbReference type="NCBI Taxonomy" id="1200835"/>
    <lineage>
        <taxon>Eukaryota</taxon>
        <taxon>Metazoa</taxon>
        <taxon>Chordata</taxon>
        <taxon>Craniata</taxon>
        <taxon>Vertebrata</taxon>
        <taxon>Euteleostomi</taxon>
        <taxon>Lepidosauria</taxon>
        <taxon>Squamata</taxon>
        <taxon>Bifurcata</taxon>
        <taxon>Unidentata</taxon>
        <taxon>Episquamata</taxon>
        <taxon>Toxicofera</taxon>
        <taxon>Serpentes</taxon>
        <taxon>Colubroidea</taxon>
        <taxon>Viperidae</taxon>
        <taxon>Crotalinae</taxon>
        <taxon>Cerrophidion</taxon>
    </lineage>
</organism>